<evidence type="ECO:0000255" key="1">
    <source>
        <dbReference type="HAMAP-Rule" id="MF_00632"/>
    </source>
</evidence>
<gene>
    <name type="ordered locus">Ccur92_01650</name>
    <name type="ORF">CCV52592_1539</name>
</gene>
<reference key="1">
    <citation type="submission" date="2007-07" db="EMBL/GenBank/DDBJ databases">
        <title>Genome sequence of Campylobacter curvus 525.92 isolated from human feces.</title>
        <authorList>
            <person name="Fouts D.E."/>
            <person name="Mongodin E.F."/>
            <person name="Puiu D."/>
            <person name="Sebastian Y."/>
            <person name="Miller W.G."/>
            <person name="Mandrell R.E."/>
            <person name="Lastovica A.J."/>
            <person name="Nelson K.E."/>
        </authorList>
    </citation>
    <scope>NUCLEOTIDE SEQUENCE [LARGE SCALE GENOMIC DNA]</scope>
    <source>
        <strain>525.92</strain>
    </source>
</reference>
<proteinExistence type="inferred from homology"/>
<keyword id="KW-0547">Nucleotide-binding</keyword>
<keyword id="KW-1185">Reference proteome</keyword>
<comment type="function">
    <text evidence="1">Nucleotide-binding protein.</text>
</comment>
<comment type="similarity">
    <text evidence="1">Belongs to the YajQ family.</text>
</comment>
<dbReference type="EMBL" id="CP000767">
    <property type="protein sequence ID" value="EAU00561.1"/>
    <property type="molecule type" value="Genomic_DNA"/>
</dbReference>
<dbReference type="RefSeq" id="WP_011991734.1">
    <property type="nucleotide sequence ID" value="NC_009715.2"/>
</dbReference>
<dbReference type="SMR" id="A7GW77"/>
<dbReference type="STRING" id="360105.CCV52592_1539"/>
<dbReference type="KEGG" id="ccv:CCV52592_1539"/>
<dbReference type="HOGENOM" id="CLU_099839_1_0_7"/>
<dbReference type="OrthoDB" id="9801447at2"/>
<dbReference type="Proteomes" id="UP000006380">
    <property type="component" value="Chromosome"/>
</dbReference>
<dbReference type="GO" id="GO:0005829">
    <property type="term" value="C:cytosol"/>
    <property type="evidence" value="ECO:0007669"/>
    <property type="project" value="TreeGrafter"/>
</dbReference>
<dbReference type="GO" id="GO:0000166">
    <property type="term" value="F:nucleotide binding"/>
    <property type="evidence" value="ECO:0007669"/>
    <property type="project" value="TreeGrafter"/>
</dbReference>
<dbReference type="CDD" id="cd11740">
    <property type="entry name" value="YajQ_like"/>
    <property type="match status" value="1"/>
</dbReference>
<dbReference type="Gene3D" id="3.30.70.860">
    <property type="match status" value="1"/>
</dbReference>
<dbReference type="Gene3D" id="3.30.70.990">
    <property type="entry name" value="YajQ-like, domain 2"/>
    <property type="match status" value="1"/>
</dbReference>
<dbReference type="HAMAP" id="MF_00632">
    <property type="entry name" value="YajQ"/>
    <property type="match status" value="1"/>
</dbReference>
<dbReference type="InterPro" id="IPR007551">
    <property type="entry name" value="DUF520"/>
</dbReference>
<dbReference type="InterPro" id="IPR035571">
    <property type="entry name" value="UPF0234-like_C"/>
</dbReference>
<dbReference type="InterPro" id="IPR035570">
    <property type="entry name" value="UPF0234_N"/>
</dbReference>
<dbReference type="InterPro" id="IPR036183">
    <property type="entry name" value="YajQ-like_sf"/>
</dbReference>
<dbReference type="NCBIfam" id="NF003819">
    <property type="entry name" value="PRK05412.1"/>
    <property type="match status" value="1"/>
</dbReference>
<dbReference type="PANTHER" id="PTHR30476">
    <property type="entry name" value="UPF0234 PROTEIN YAJQ"/>
    <property type="match status" value="1"/>
</dbReference>
<dbReference type="PANTHER" id="PTHR30476:SF0">
    <property type="entry name" value="UPF0234 PROTEIN YAJQ"/>
    <property type="match status" value="1"/>
</dbReference>
<dbReference type="Pfam" id="PF04461">
    <property type="entry name" value="DUF520"/>
    <property type="match status" value="1"/>
</dbReference>
<dbReference type="SUPFAM" id="SSF89963">
    <property type="entry name" value="YajQ-like"/>
    <property type="match status" value="2"/>
</dbReference>
<sequence length="165" mass="18173">MASEHSFDISAQVDMMEVKNALETSKKELTARYDFKGVTAQIELSEKDKTITILSSSGNKVDALKDIVISKLIKRNIPPVALSESKRESASGGNIKATLKLNDTLDTENSKKITKAIKDAKLKVTATIRGEEVRVSGKSIDDLQECIRLVKALNLELPINFKNLK</sequence>
<accession>A7GW77</accession>
<feature type="chain" id="PRO_1000147285" description="Nucleotide-binding protein Ccur92_01650">
    <location>
        <begin position="1"/>
        <end position="165"/>
    </location>
</feature>
<name>Y165_CAMC5</name>
<protein>
    <recommendedName>
        <fullName evidence="1">Nucleotide-binding protein Ccur92_01650</fullName>
    </recommendedName>
</protein>
<organism>
    <name type="scientific">Campylobacter curvus (strain 525.92)</name>
    <dbReference type="NCBI Taxonomy" id="360105"/>
    <lineage>
        <taxon>Bacteria</taxon>
        <taxon>Pseudomonadati</taxon>
        <taxon>Campylobacterota</taxon>
        <taxon>Epsilonproteobacteria</taxon>
        <taxon>Campylobacterales</taxon>
        <taxon>Campylobacteraceae</taxon>
        <taxon>Campylobacter</taxon>
    </lineage>
</organism>